<feature type="chain" id="PRO_0000147944" description="Phosphoglucosamine mutase">
    <location>
        <begin position="1"/>
        <end position="455"/>
    </location>
</feature>
<feature type="active site" description="Phosphoserine intermediate" evidence="1">
    <location>
        <position position="104"/>
    </location>
</feature>
<feature type="binding site" description="via phosphate group" evidence="1">
    <location>
        <position position="104"/>
    </location>
    <ligand>
        <name>Mg(2+)</name>
        <dbReference type="ChEBI" id="CHEBI:18420"/>
    </ligand>
</feature>
<feature type="binding site" evidence="1">
    <location>
        <position position="253"/>
    </location>
    <ligand>
        <name>Mg(2+)</name>
        <dbReference type="ChEBI" id="CHEBI:18420"/>
    </ligand>
</feature>
<feature type="binding site" evidence="1">
    <location>
        <position position="255"/>
    </location>
    <ligand>
        <name>Mg(2+)</name>
        <dbReference type="ChEBI" id="CHEBI:18420"/>
    </ligand>
</feature>
<feature type="binding site" evidence="1">
    <location>
        <position position="257"/>
    </location>
    <ligand>
        <name>Mg(2+)</name>
        <dbReference type="ChEBI" id="CHEBI:18420"/>
    </ligand>
</feature>
<feature type="modified residue" description="Phosphoserine" evidence="1">
    <location>
        <position position="104"/>
    </location>
</feature>
<accession>Q4FS01</accession>
<sequence length="455" mass="48804">MSYFGTDGIRGKFGELPITPDFILKLGYVTGLVLIENSQNSARKPSVVIGKDTRLSGYVIEGALQAGFNAAGVDVHMLGPLPTPAIAHLTRSFNADAGVVISASHNPYYDNGIKFFSGDGKKLTDEMQNAINDKLDTIMAATGSNDALMPILDPAQLGKNNRIDDAKGRYIEFCKGSFPYQYDLDHLTVVVDCANGAGYSVAPRVMRELGANVIAINHKPDGININAHCGSTHPEGLQAAVLKYEADVGIALDGDGDRIVMVDEAGHLVDGDGILYVLATQGQTKVAGVVGTLMSNMGLELALKAADIEFTRAKVGDRYVMQELEANGWILGGEPSGHILCLDKSRTGDAIIASLQILAVMQARGKALSDLTEGFEVLPQKLVNVRLSQMQDPFEHEELVAAFDKARATLEGRGRLLIRQSGTEPMIRVMVESDDEIECDVMANDLADKIKDTLG</sequence>
<proteinExistence type="inferred from homology"/>
<comment type="function">
    <text evidence="1">Catalyzes the conversion of glucosamine-6-phosphate to glucosamine-1-phosphate.</text>
</comment>
<comment type="catalytic activity">
    <reaction evidence="1">
        <text>alpha-D-glucosamine 1-phosphate = D-glucosamine 6-phosphate</text>
        <dbReference type="Rhea" id="RHEA:23424"/>
        <dbReference type="ChEBI" id="CHEBI:58516"/>
        <dbReference type="ChEBI" id="CHEBI:58725"/>
        <dbReference type="EC" id="5.4.2.10"/>
    </reaction>
</comment>
<comment type="cofactor">
    <cofactor evidence="1">
        <name>Mg(2+)</name>
        <dbReference type="ChEBI" id="CHEBI:18420"/>
    </cofactor>
    <text evidence="1">Binds 1 Mg(2+) ion per subunit.</text>
</comment>
<comment type="PTM">
    <text evidence="1">Activated by phosphorylation.</text>
</comment>
<comment type="similarity">
    <text evidence="1">Belongs to the phosphohexose mutase family.</text>
</comment>
<gene>
    <name evidence="1" type="primary">glmM</name>
    <name type="ordered locus">Psyc_1359</name>
</gene>
<reference key="1">
    <citation type="journal article" date="2010" name="Appl. Environ. Microbiol.">
        <title>The genome sequence of Psychrobacter arcticus 273-4, a psychroactive Siberian permafrost bacterium, reveals mechanisms for adaptation to low-temperature growth.</title>
        <authorList>
            <person name="Ayala-del-Rio H.L."/>
            <person name="Chain P.S."/>
            <person name="Grzymski J.J."/>
            <person name="Ponder M.A."/>
            <person name="Ivanova N."/>
            <person name="Bergholz P.W."/>
            <person name="Di Bartolo G."/>
            <person name="Hauser L."/>
            <person name="Land M."/>
            <person name="Bakermans C."/>
            <person name="Rodrigues D."/>
            <person name="Klappenbach J."/>
            <person name="Zarka D."/>
            <person name="Larimer F."/>
            <person name="Richardson P."/>
            <person name="Murray A."/>
            <person name="Thomashow M."/>
            <person name="Tiedje J.M."/>
        </authorList>
    </citation>
    <scope>NUCLEOTIDE SEQUENCE [LARGE SCALE GENOMIC DNA]</scope>
    <source>
        <strain>DSM 17307 / VKM B-2377 / 273-4</strain>
    </source>
</reference>
<evidence type="ECO:0000255" key="1">
    <source>
        <dbReference type="HAMAP-Rule" id="MF_01554"/>
    </source>
</evidence>
<name>GLMM_PSYA2</name>
<keyword id="KW-0413">Isomerase</keyword>
<keyword id="KW-0460">Magnesium</keyword>
<keyword id="KW-0479">Metal-binding</keyword>
<keyword id="KW-0597">Phosphoprotein</keyword>
<keyword id="KW-1185">Reference proteome</keyword>
<protein>
    <recommendedName>
        <fullName evidence="1">Phosphoglucosamine mutase</fullName>
        <ecNumber evidence="1">5.4.2.10</ecNumber>
    </recommendedName>
</protein>
<dbReference type="EC" id="5.4.2.10" evidence="1"/>
<dbReference type="EMBL" id="CP000082">
    <property type="protein sequence ID" value="AAZ19207.1"/>
    <property type="molecule type" value="Genomic_DNA"/>
</dbReference>
<dbReference type="RefSeq" id="WP_011280628.1">
    <property type="nucleotide sequence ID" value="NC_007204.1"/>
</dbReference>
<dbReference type="SMR" id="Q4FS01"/>
<dbReference type="STRING" id="259536.Psyc_1359"/>
<dbReference type="KEGG" id="par:Psyc_1359"/>
<dbReference type="eggNOG" id="COG1109">
    <property type="taxonomic scope" value="Bacteria"/>
</dbReference>
<dbReference type="HOGENOM" id="CLU_016950_7_0_6"/>
<dbReference type="OrthoDB" id="9803322at2"/>
<dbReference type="Proteomes" id="UP000000546">
    <property type="component" value="Chromosome"/>
</dbReference>
<dbReference type="GO" id="GO:0005829">
    <property type="term" value="C:cytosol"/>
    <property type="evidence" value="ECO:0007669"/>
    <property type="project" value="TreeGrafter"/>
</dbReference>
<dbReference type="GO" id="GO:0000287">
    <property type="term" value="F:magnesium ion binding"/>
    <property type="evidence" value="ECO:0007669"/>
    <property type="project" value="UniProtKB-UniRule"/>
</dbReference>
<dbReference type="GO" id="GO:0008966">
    <property type="term" value="F:phosphoglucosamine mutase activity"/>
    <property type="evidence" value="ECO:0007669"/>
    <property type="project" value="UniProtKB-UniRule"/>
</dbReference>
<dbReference type="GO" id="GO:0004615">
    <property type="term" value="F:phosphomannomutase activity"/>
    <property type="evidence" value="ECO:0007669"/>
    <property type="project" value="TreeGrafter"/>
</dbReference>
<dbReference type="GO" id="GO:0005975">
    <property type="term" value="P:carbohydrate metabolic process"/>
    <property type="evidence" value="ECO:0007669"/>
    <property type="project" value="InterPro"/>
</dbReference>
<dbReference type="GO" id="GO:0009252">
    <property type="term" value="P:peptidoglycan biosynthetic process"/>
    <property type="evidence" value="ECO:0007669"/>
    <property type="project" value="TreeGrafter"/>
</dbReference>
<dbReference type="GO" id="GO:0006048">
    <property type="term" value="P:UDP-N-acetylglucosamine biosynthetic process"/>
    <property type="evidence" value="ECO:0007669"/>
    <property type="project" value="TreeGrafter"/>
</dbReference>
<dbReference type="CDD" id="cd05802">
    <property type="entry name" value="GlmM"/>
    <property type="match status" value="1"/>
</dbReference>
<dbReference type="FunFam" id="3.30.310.50:FF:000001">
    <property type="entry name" value="Phosphoglucosamine mutase"/>
    <property type="match status" value="1"/>
</dbReference>
<dbReference type="FunFam" id="3.40.120.10:FF:000001">
    <property type="entry name" value="Phosphoglucosamine mutase"/>
    <property type="match status" value="1"/>
</dbReference>
<dbReference type="FunFam" id="3.40.120.10:FF:000003">
    <property type="entry name" value="Phosphoglucosamine mutase"/>
    <property type="match status" value="1"/>
</dbReference>
<dbReference type="Gene3D" id="3.40.120.10">
    <property type="entry name" value="Alpha-D-Glucose-1,6-Bisphosphate, subunit A, domain 3"/>
    <property type="match status" value="3"/>
</dbReference>
<dbReference type="Gene3D" id="3.30.310.50">
    <property type="entry name" value="Alpha-D-phosphohexomutase, C-terminal domain"/>
    <property type="match status" value="1"/>
</dbReference>
<dbReference type="HAMAP" id="MF_01554_B">
    <property type="entry name" value="GlmM_B"/>
    <property type="match status" value="1"/>
</dbReference>
<dbReference type="InterPro" id="IPR005844">
    <property type="entry name" value="A-D-PHexomutase_a/b/a-I"/>
</dbReference>
<dbReference type="InterPro" id="IPR016055">
    <property type="entry name" value="A-D-PHexomutase_a/b/a-I/II/III"/>
</dbReference>
<dbReference type="InterPro" id="IPR005845">
    <property type="entry name" value="A-D-PHexomutase_a/b/a-II"/>
</dbReference>
<dbReference type="InterPro" id="IPR005846">
    <property type="entry name" value="A-D-PHexomutase_a/b/a-III"/>
</dbReference>
<dbReference type="InterPro" id="IPR005843">
    <property type="entry name" value="A-D-PHexomutase_C"/>
</dbReference>
<dbReference type="InterPro" id="IPR036900">
    <property type="entry name" value="A-D-PHexomutase_C_sf"/>
</dbReference>
<dbReference type="InterPro" id="IPR016066">
    <property type="entry name" value="A-D-PHexomutase_CS"/>
</dbReference>
<dbReference type="InterPro" id="IPR005841">
    <property type="entry name" value="Alpha-D-phosphohexomutase_SF"/>
</dbReference>
<dbReference type="InterPro" id="IPR006352">
    <property type="entry name" value="GlmM_bact"/>
</dbReference>
<dbReference type="InterPro" id="IPR050060">
    <property type="entry name" value="Phosphoglucosamine_mutase"/>
</dbReference>
<dbReference type="NCBIfam" id="TIGR01455">
    <property type="entry name" value="glmM"/>
    <property type="match status" value="1"/>
</dbReference>
<dbReference type="NCBIfam" id="NF008139">
    <property type="entry name" value="PRK10887.1"/>
    <property type="match status" value="1"/>
</dbReference>
<dbReference type="PANTHER" id="PTHR42946:SF1">
    <property type="entry name" value="PHOSPHOGLUCOMUTASE (ALPHA-D-GLUCOSE-1,6-BISPHOSPHATE-DEPENDENT)"/>
    <property type="match status" value="1"/>
</dbReference>
<dbReference type="PANTHER" id="PTHR42946">
    <property type="entry name" value="PHOSPHOHEXOSE MUTASE"/>
    <property type="match status" value="1"/>
</dbReference>
<dbReference type="Pfam" id="PF02878">
    <property type="entry name" value="PGM_PMM_I"/>
    <property type="match status" value="1"/>
</dbReference>
<dbReference type="Pfam" id="PF02879">
    <property type="entry name" value="PGM_PMM_II"/>
    <property type="match status" value="1"/>
</dbReference>
<dbReference type="Pfam" id="PF02880">
    <property type="entry name" value="PGM_PMM_III"/>
    <property type="match status" value="1"/>
</dbReference>
<dbReference type="Pfam" id="PF00408">
    <property type="entry name" value="PGM_PMM_IV"/>
    <property type="match status" value="1"/>
</dbReference>
<dbReference type="PRINTS" id="PR00509">
    <property type="entry name" value="PGMPMM"/>
</dbReference>
<dbReference type="SUPFAM" id="SSF55957">
    <property type="entry name" value="Phosphoglucomutase, C-terminal domain"/>
    <property type="match status" value="1"/>
</dbReference>
<dbReference type="SUPFAM" id="SSF53738">
    <property type="entry name" value="Phosphoglucomutase, first 3 domains"/>
    <property type="match status" value="3"/>
</dbReference>
<dbReference type="PROSITE" id="PS00710">
    <property type="entry name" value="PGM_PMM"/>
    <property type="match status" value="1"/>
</dbReference>
<organism>
    <name type="scientific">Psychrobacter arcticus (strain DSM 17307 / VKM B-2377 / 273-4)</name>
    <dbReference type="NCBI Taxonomy" id="259536"/>
    <lineage>
        <taxon>Bacteria</taxon>
        <taxon>Pseudomonadati</taxon>
        <taxon>Pseudomonadota</taxon>
        <taxon>Gammaproteobacteria</taxon>
        <taxon>Moraxellales</taxon>
        <taxon>Moraxellaceae</taxon>
        <taxon>Psychrobacter</taxon>
    </lineage>
</organism>